<dbReference type="EC" id="1.1.1.95" evidence="2"/>
<dbReference type="EC" id="1.1.1.399" evidence="2"/>
<dbReference type="EMBL" id="LT708304">
    <property type="protein sequence ID" value="SIU01644.1"/>
    <property type="molecule type" value="Genomic_DNA"/>
</dbReference>
<dbReference type="RefSeq" id="NP_856665.1">
    <property type="nucleotide sequence ID" value="NC_002945.3"/>
</dbReference>
<dbReference type="RefSeq" id="WP_003899578.1">
    <property type="nucleotide sequence ID" value="NC_002945.4"/>
</dbReference>
<dbReference type="SMR" id="P0A545"/>
<dbReference type="GeneID" id="45426986"/>
<dbReference type="KEGG" id="mbo:BQ2027_MB3020C"/>
<dbReference type="PATRIC" id="fig|233413.5.peg.3319"/>
<dbReference type="UniPathway" id="UPA00135">
    <property type="reaction ID" value="UER00196"/>
</dbReference>
<dbReference type="Proteomes" id="UP000001419">
    <property type="component" value="Chromosome"/>
</dbReference>
<dbReference type="GO" id="GO:0051287">
    <property type="term" value="F:NAD binding"/>
    <property type="evidence" value="ECO:0007669"/>
    <property type="project" value="InterPro"/>
</dbReference>
<dbReference type="GO" id="GO:0004617">
    <property type="term" value="F:phosphoglycerate dehydrogenase activity"/>
    <property type="evidence" value="ECO:0007669"/>
    <property type="project" value="UniProtKB-EC"/>
</dbReference>
<dbReference type="GO" id="GO:0006564">
    <property type="term" value="P:L-serine biosynthetic process"/>
    <property type="evidence" value="ECO:0007669"/>
    <property type="project" value="UniProtKB-KW"/>
</dbReference>
<dbReference type="CDD" id="cd04902">
    <property type="entry name" value="ACT_3PGDH-xct"/>
    <property type="match status" value="1"/>
</dbReference>
<dbReference type="CDD" id="cd12173">
    <property type="entry name" value="PGDH_4"/>
    <property type="match status" value="1"/>
</dbReference>
<dbReference type="FunFam" id="3.30.1330.90:FF:000009">
    <property type="entry name" value="D-3-phosphoglycerate dehydrogenase"/>
    <property type="match status" value="1"/>
</dbReference>
<dbReference type="FunFam" id="3.30.70.260:FF:000081">
    <property type="entry name" value="D-3-phosphoglycerate dehydrogenase"/>
    <property type="match status" value="1"/>
</dbReference>
<dbReference type="FunFam" id="3.40.50.720:FF:000021">
    <property type="entry name" value="D-3-phosphoglycerate dehydrogenase"/>
    <property type="match status" value="1"/>
</dbReference>
<dbReference type="Gene3D" id="3.30.70.260">
    <property type="match status" value="1"/>
</dbReference>
<dbReference type="Gene3D" id="3.30.1330.90">
    <property type="entry name" value="D-3-phosphoglycerate dehydrogenase, domain 3"/>
    <property type="match status" value="1"/>
</dbReference>
<dbReference type="Gene3D" id="3.40.50.720">
    <property type="entry name" value="NAD(P)-binding Rossmann-like Domain"/>
    <property type="match status" value="2"/>
</dbReference>
<dbReference type="InterPro" id="IPR045865">
    <property type="entry name" value="ACT-like_dom_sf"/>
</dbReference>
<dbReference type="InterPro" id="IPR002912">
    <property type="entry name" value="ACT_dom"/>
</dbReference>
<dbReference type="InterPro" id="IPR029009">
    <property type="entry name" value="ASB_dom_sf"/>
</dbReference>
<dbReference type="InterPro" id="IPR050857">
    <property type="entry name" value="D-2-hydroxyacid_DH"/>
</dbReference>
<dbReference type="InterPro" id="IPR006139">
    <property type="entry name" value="D-isomer_2_OHA_DH_cat_dom"/>
</dbReference>
<dbReference type="InterPro" id="IPR029753">
    <property type="entry name" value="D-isomer_DH_CS"/>
</dbReference>
<dbReference type="InterPro" id="IPR029752">
    <property type="entry name" value="D-isomer_DH_CS1"/>
</dbReference>
<dbReference type="InterPro" id="IPR006140">
    <property type="entry name" value="D-isomer_DH_NAD-bd"/>
</dbReference>
<dbReference type="InterPro" id="IPR036291">
    <property type="entry name" value="NAD(P)-bd_dom_sf"/>
</dbReference>
<dbReference type="InterPro" id="IPR006236">
    <property type="entry name" value="PGDH"/>
</dbReference>
<dbReference type="InterPro" id="IPR045626">
    <property type="entry name" value="PGDH_ASB_dom"/>
</dbReference>
<dbReference type="NCBIfam" id="TIGR01327">
    <property type="entry name" value="PGDH"/>
    <property type="match status" value="1"/>
</dbReference>
<dbReference type="PANTHER" id="PTHR42789">
    <property type="entry name" value="D-ISOMER SPECIFIC 2-HYDROXYACID DEHYDROGENASE FAMILY PROTEIN (AFU_ORTHOLOGUE AFUA_6G10090)"/>
    <property type="match status" value="1"/>
</dbReference>
<dbReference type="PANTHER" id="PTHR42789:SF1">
    <property type="entry name" value="D-ISOMER SPECIFIC 2-HYDROXYACID DEHYDROGENASE FAMILY PROTEIN (AFU_ORTHOLOGUE AFUA_6G10090)"/>
    <property type="match status" value="1"/>
</dbReference>
<dbReference type="Pfam" id="PF00389">
    <property type="entry name" value="2-Hacid_dh"/>
    <property type="match status" value="1"/>
</dbReference>
<dbReference type="Pfam" id="PF02826">
    <property type="entry name" value="2-Hacid_dh_C"/>
    <property type="match status" value="1"/>
</dbReference>
<dbReference type="Pfam" id="PF01842">
    <property type="entry name" value="ACT"/>
    <property type="match status" value="1"/>
</dbReference>
<dbReference type="Pfam" id="PF19304">
    <property type="entry name" value="PGDH_inter"/>
    <property type="match status" value="1"/>
</dbReference>
<dbReference type="SUPFAM" id="SSF55021">
    <property type="entry name" value="ACT-like"/>
    <property type="match status" value="1"/>
</dbReference>
<dbReference type="SUPFAM" id="SSF52283">
    <property type="entry name" value="Formate/glycerate dehydrogenase catalytic domain-like"/>
    <property type="match status" value="1"/>
</dbReference>
<dbReference type="SUPFAM" id="SSF51735">
    <property type="entry name" value="NAD(P)-binding Rossmann-fold domains"/>
    <property type="match status" value="1"/>
</dbReference>
<dbReference type="SUPFAM" id="SSF143548">
    <property type="entry name" value="Serine metabolism enzymes domain"/>
    <property type="match status" value="1"/>
</dbReference>
<dbReference type="PROSITE" id="PS51671">
    <property type="entry name" value="ACT"/>
    <property type="match status" value="1"/>
</dbReference>
<dbReference type="PROSITE" id="PS00065">
    <property type="entry name" value="D_2_HYDROXYACID_DH_1"/>
    <property type="match status" value="1"/>
</dbReference>
<dbReference type="PROSITE" id="PS00670">
    <property type="entry name" value="D_2_HYDROXYACID_DH_2"/>
    <property type="match status" value="1"/>
</dbReference>
<dbReference type="PROSITE" id="PS00671">
    <property type="entry name" value="D_2_HYDROXYACID_DH_3"/>
    <property type="match status" value="1"/>
</dbReference>
<protein>
    <recommendedName>
        <fullName>D-3-phosphoglycerate dehydrogenase</fullName>
        <shortName>PGDH</shortName>
        <ecNumber evidence="2">1.1.1.95</ecNumber>
    </recommendedName>
    <alternativeName>
        <fullName evidence="2">2-oxoglutarate reductase</fullName>
        <ecNumber evidence="2">1.1.1.399</ecNumber>
    </alternativeName>
</protein>
<gene>
    <name type="primary">serA</name>
    <name type="ordered locus">BQ2027_MB3020C</name>
</gene>
<name>SERA_MYCBO</name>
<sequence length="528" mass="54554">MSLPVVLIADKLAPSTVAALGDQVEVRWVDGPDRDKLLAAVPEADALLVRSATTVDAEVLAAAPKLKIVARAGVGLDNVDVDAATARGVLVVNAPTSNIHSAAEHALALLLAASRQIPAADASLREHTWKRSSFSGTEIFGKTVGVVGLGRIGQLVAQRIAAFGAYVVAYDPYVSPARAAQLGIELLSLDDLLARADFISVHLPKTPETAGLIDKEALAKTKPGVIIVNAARGGLVDEAALADAITGGHVRAAGLDVFATEPCTDSPLFELAQVVVTPHLGASTAEAQDRAGTDVAESVRLALAGEFVPDAVNVGGGVVNEEVAPWLDLVRKLGVLAGVLSDELPVSLSVQVRGELAAEEVEVLRLSALRGLFSAVIEDAVTFVNAPALAAERGVTAEICKASESPNHRSVVDVRAVGADGSVVTVSGTLYGPQLSQKIVQINGRHFDLRAQGINLIIHYVDRPGALGKIGTLLGTAGVNIQAAQLSEDAEGPGATILLRLDQDVPDDVRTAIAAAVDAYKLEVVDLS</sequence>
<organism>
    <name type="scientific">Mycobacterium bovis (strain ATCC BAA-935 / AF2122/97)</name>
    <dbReference type="NCBI Taxonomy" id="233413"/>
    <lineage>
        <taxon>Bacteria</taxon>
        <taxon>Bacillati</taxon>
        <taxon>Actinomycetota</taxon>
        <taxon>Actinomycetes</taxon>
        <taxon>Mycobacteriales</taxon>
        <taxon>Mycobacteriaceae</taxon>
        <taxon>Mycobacterium</taxon>
        <taxon>Mycobacterium tuberculosis complex</taxon>
    </lineage>
</organism>
<comment type="function">
    <text evidence="2">Catalyzes the reversible oxidation of 3-phospho-D-glycerate to 3-phosphonooxypyruvate, the first step of the phosphorylated L-serine biosynthesis pathway. Also catalyzes the reversible oxidation of 2-hydroxyglutarate to 2-oxoglutarate.</text>
</comment>
<comment type="catalytic activity">
    <reaction evidence="2">
        <text>(2R)-3-phosphoglycerate + NAD(+) = 3-phosphooxypyruvate + NADH + H(+)</text>
        <dbReference type="Rhea" id="RHEA:12641"/>
        <dbReference type="ChEBI" id="CHEBI:15378"/>
        <dbReference type="ChEBI" id="CHEBI:18110"/>
        <dbReference type="ChEBI" id="CHEBI:57540"/>
        <dbReference type="ChEBI" id="CHEBI:57945"/>
        <dbReference type="ChEBI" id="CHEBI:58272"/>
        <dbReference type="EC" id="1.1.1.95"/>
    </reaction>
</comment>
<comment type="catalytic activity">
    <reaction evidence="2">
        <text>(R)-2-hydroxyglutarate + NAD(+) = 2-oxoglutarate + NADH + H(+)</text>
        <dbReference type="Rhea" id="RHEA:49612"/>
        <dbReference type="ChEBI" id="CHEBI:15378"/>
        <dbReference type="ChEBI" id="CHEBI:15801"/>
        <dbReference type="ChEBI" id="CHEBI:16810"/>
        <dbReference type="ChEBI" id="CHEBI:57540"/>
        <dbReference type="ChEBI" id="CHEBI:57945"/>
        <dbReference type="EC" id="1.1.1.399"/>
    </reaction>
</comment>
<comment type="pathway">
    <text>Amino-acid biosynthesis; L-serine biosynthesis; L-serine from 3-phospho-D-glycerate: step 1/3.</text>
</comment>
<comment type="similarity">
    <text evidence="4">Belongs to the D-isomer specific 2-hydroxyacid dehydrogenase family.</text>
</comment>
<feature type="chain" id="PRO_0000076003" description="D-3-phosphoglycerate dehydrogenase">
    <location>
        <begin position="1"/>
        <end position="528"/>
    </location>
</feature>
<feature type="domain" description="ACT" evidence="3">
    <location>
        <begin position="455"/>
        <end position="527"/>
    </location>
</feature>
<feature type="active site" evidence="1">
    <location>
        <position position="232"/>
    </location>
</feature>
<feature type="active site" evidence="1">
    <location>
        <position position="261"/>
    </location>
</feature>
<feature type="active site" description="Proton donor" evidence="1">
    <location>
        <position position="279"/>
    </location>
</feature>
<feature type="binding site" evidence="2">
    <location>
        <begin position="151"/>
        <end position="152"/>
    </location>
    <ligand>
        <name>NAD(+)</name>
        <dbReference type="ChEBI" id="CHEBI:57540"/>
    </ligand>
</feature>
<feature type="binding site" evidence="2">
    <location>
        <position position="171"/>
    </location>
    <ligand>
        <name>NAD(+)</name>
        <dbReference type="ChEBI" id="CHEBI:57540"/>
    </ligand>
</feature>
<feature type="binding site" evidence="2">
    <location>
        <begin position="230"/>
        <end position="232"/>
    </location>
    <ligand>
        <name>NAD(+)</name>
        <dbReference type="ChEBI" id="CHEBI:57540"/>
    </ligand>
</feature>
<feature type="binding site" evidence="2">
    <location>
        <position position="256"/>
    </location>
    <ligand>
        <name>NAD(+)</name>
        <dbReference type="ChEBI" id="CHEBI:57540"/>
    </ligand>
</feature>
<feature type="binding site" evidence="2">
    <location>
        <begin position="279"/>
        <end position="282"/>
    </location>
    <ligand>
        <name>NAD(+)</name>
        <dbReference type="ChEBI" id="CHEBI:57540"/>
    </ligand>
</feature>
<reference key="1">
    <citation type="journal article" date="2003" name="Proc. Natl. Acad. Sci. U.S.A.">
        <title>The complete genome sequence of Mycobacterium bovis.</title>
        <authorList>
            <person name="Garnier T."/>
            <person name="Eiglmeier K."/>
            <person name="Camus J.-C."/>
            <person name="Medina N."/>
            <person name="Mansoor H."/>
            <person name="Pryor M."/>
            <person name="Duthoy S."/>
            <person name="Grondin S."/>
            <person name="Lacroix C."/>
            <person name="Monsempe C."/>
            <person name="Simon S."/>
            <person name="Harris B."/>
            <person name="Atkin R."/>
            <person name="Doggett J."/>
            <person name="Mayes R."/>
            <person name="Keating L."/>
            <person name="Wheeler P.R."/>
            <person name="Parkhill J."/>
            <person name="Barrell B.G."/>
            <person name="Cole S.T."/>
            <person name="Gordon S.V."/>
            <person name="Hewinson R.G."/>
        </authorList>
    </citation>
    <scope>NUCLEOTIDE SEQUENCE [LARGE SCALE GENOMIC DNA]</scope>
    <source>
        <strain>ATCC BAA-935 / AF2122/97</strain>
    </source>
</reference>
<reference key="2">
    <citation type="journal article" date="2017" name="Genome Announc.">
        <title>Updated reference genome sequence and annotation of Mycobacterium bovis AF2122/97.</title>
        <authorList>
            <person name="Malone K.M."/>
            <person name="Farrell D."/>
            <person name="Stuber T.P."/>
            <person name="Schubert O.T."/>
            <person name="Aebersold R."/>
            <person name="Robbe-Austerman S."/>
            <person name="Gordon S.V."/>
        </authorList>
    </citation>
    <scope>NUCLEOTIDE SEQUENCE [LARGE SCALE GENOMIC DNA]</scope>
    <scope>GENOME REANNOTATION</scope>
    <source>
        <strain>ATCC BAA-935 / AF2122/97</strain>
    </source>
</reference>
<accession>P0A545</accession>
<accession>A0A1R3Y2U1</accession>
<accession>O53243</accession>
<accession>X2BME8</accession>
<proteinExistence type="inferred from homology"/>
<keyword id="KW-0028">Amino-acid biosynthesis</keyword>
<keyword id="KW-0520">NAD</keyword>
<keyword id="KW-0560">Oxidoreductase</keyword>
<keyword id="KW-1185">Reference proteome</keyword>
<keyword id="KW-0718">Serine biosynthesis</keyword>
<evidence type="ECO:0000250" key="1"/>
<evidence type="ECO:0000250" key="2">
    <source>
        <dbReference type="UniProtKB" id="P0A9T0"/>
    </source>
</evidence>
<evidence type="ECO:0000255" key="3">
    <source>
        <dbReference type="PROSITE-ProRule" id="PRU01007"/>
    </source>
</evidence>
<evidence type="ECO:0000305" key="4"/>